<accession>Q97BM8</accession>
<gene>
    <name evidence="4" type="ordered locus">TV0427</name>
    <name evidence="6" type="ORF">TVG0411662</name>
</gene>
<evidence type="ECO:0000250" key="1">
    <source>
        <dbReference type="UniProtKB" id="Q9HJS1"/>
    </source>
</evidence>
<evidence type="ECO:0000269" key="2">
    <source>
    </source>
</evidence>
<evidence type="ECO:0000303" key="3">
    <source>
    </source>
</evidence>
<evidence type="ECO:0000305" key="4"/>
<evidence type="ECO:0000305" key="5">
    <source>
    </source>
</evidence>
<evidence type="ECO:0000312" key="6">
    <source>
        <dbReference type="EMBL" id="BAB59569.1"/>
    </source>
</evidence>
<protein>
    <recommendedName>
        <fullName evidence="3">Mevalonate 3,5-bisphosphate decarboxylase</fullName>
        <shortName evidence="3">MBD</shortName>
        <ecNumber evidence="2">4.1.1.110</ecNumber>
    </recommendedName>
    <alternativeName>
        <fullName evidence="4">Bisphosphomevalonate decarboxylase</fullName>
    </alternativeName>
</protein>
<dbReference type="EC" id="4.1.1.110" evidence="2"/>
<dbReference type="EMBL" id="BA000011">
    <property type="protein sequence ID" value="BAB59569.1"/>
    <property type="molecule type" value="Genomic_DNA"/>
</dbReference>
<dbReference type="SMR" id="Q97BM8"/>
<dbReference type="STRING" id="273116.gene:9381205"/>
<dbReference type="PaxDb" id="273116-14324642"/>
<dbReference type="KEGG" id="tvo:TVG0411662"/>
<dbReference type="eggNOG" id="arCOG02937">
    <property type="taxonomic scope" value="Archaea"/>
</dbReference>
<dbReference type="HOGENOM" id="CLU_743187_0_0_2"/>
<dbReference type="PhylomeDB" id="Q97BM8"/>
<dbReference type="BRENDA" id="4.1.1.110">
    <property type="organism ID" value="6326"/>
</dbReference>
<dbReference type="UniPathway" id="UPA00057"/>
<dbReference type="Proteomes" id="UP000001017">
    <property type="component" value="Chromosome"/>
</dbReference>
<dbReference type="GO" id="GO:0016831">
    <property type="term" value="F:carboxy-lyase activity"/>
    <property type="evidence" value="ECO:0007669"/>
    <property type="project" value="InterPro"/>
</dbReference>
<dbReference type="GO" id="GO:0019287">
    <property type="term" value="P:isopentenyl diphosphate biosynthetic process, mevalonate pathway"/>
    <property type="evidence" value="ECO:0007669"/>
    <property type="project" value="UniProtKB-UniPathway"/>
</dbReference>
<dbReference type="Gene3D" id="3.30.230.10">
    <property type="match status" value="1"/>
</dbReference>
<dbReference type="Gene3D" id="3.30.70.890">
    <property type="entry name" value="GHMP kinase, C-terminal domain"/>
    <property type="match status" value="1"/>
</dbReference>
<dbReference type="InterPro" id="IPR036554">
    <property type="entry name" value="GHMP_kinase_C_sf"/>
</dbReference>
<dbReference type="InterPro" id="IPR005935">
    <property type="entry name" value="Mev_decarb"/>
</dbReference>
<dbReference type="InterPro" id="IPR053859">
    <property type="entry name" value="MVD-like_N"/>
</dbReference>
<dbReference type="InterPro" id="IPR053464">
    <property type="entry name" value="MVD_Decarboxylase"/>
</dbReference>
<dbReference type="InterPro" id="IPR020568">
    <property type="entry name" value="Ribosomal_Su5_D2-typ_SF"/>
</dbReference>
<dbReference type="InterPro" id="IPR014721">
    <property type="entry name" value="Ribsml_uS5_D2-typ_fold_subgr"/>
</dbReference>
<dbReference type="NCBIfam" id="NF040847">
    <property type="entry name" value="mev_decarb"/>
    <property type="match status" value="1"/>
</dbReference>
<dbReference type="Pfam" id="PF22700">
    <property type="entry name" value="MVD-like_N"/>
    <property type="match status" value="1"/>
</dbReference>
<dbReference type="PIRSF" id="PIRSF015950">
    <property type="entry name" value="Mev_P_decrbx"/>
    <property type="match status" value="1"/>
</dbReference>
<dbReference type="SUPFAM" id="SSF55060">
    <property type="entry name" value="GHMP Kinase, C-terminal domain"/>
    <property type="match status" value="1"/>
</dbReference>
<dbReference type="SUPFAM" id="SSF54211">
    <property type="entry name" value="Ribosomal protein S5 domain 2-like"/>
    <property type="match status" value="1"/>
</dbReference>
<sequence length="372" mass="42524">MNIMEISKFQSLGDKIRTMLEDHGYLSENNDYEPNPIDGNISISYAYPIKAFEKFLGYYDVENRVAYNPSISMRTDFSYCIAACRYNKNGNEDTVILDGVTDEKYLRKAKFALDYFRKEFRIKGSFDFYIRRYRRYTKAKGLSESSAVAAAVSRALIKNVFGEGPALDDVFVSKYARLVSGSGTRAAHSGISIWLSYPGINLRECAAFRVADDPHDVYYGIFPKYTDIATDSAHSVAVKSIFYASWLEDKYANIKRLIEHNFDIDELLISGENDMLKLNAILFSGGLIIQTGESLRILRAIQDFKKNGDLFFTADTGPSIMVLSRDKSLIEELRQSVEDPYIEGTYNFNRHTRDLNNFTKEANEYFLENKIE</sequence>
<name>MBD_THEVO</name>
<reference key="1">
    <citation type="journal article" date="2000" name="Proc. Natl. Acad. Sci. U.S.A.">
        <title>Archaeal adaptation to higher temperatures revealed by genomic sequence of Thermoplasma volcanium.</title>
        <authorList>
            <person name="Kawashima T."/>
            <person name="Amano N."/>
            <person name="Koike H."/>
            <person name="Makino S."/>
            <person name="Higuchi S."/>
            <person name="Kawashima-Ohya Y."/>
            <person name="Watanabe K."/>
            <person name="Yamazaki M."/>
            <person name="Kanehori K."/>
            <person name="Kawamoto T."/>
            <person name="Nunoshiba T."/>
            <person name="Yamamoto Y."/>
            <person name="Aramaki H."/>
            <person name="Makino K."/>
            <person name="Suzuki M."/>
        </authorList>
    </citation>
    <scope>NUCLEOTIDE SEQUENCE [LARGE SCALE GENOMIC DNA]</scope>
    <source>
        <strain>ATCC 51530 / DSM 4299 / JCM 9571 / NBRC 15438 / GSS1</strain>
    </source>
</reference>
<reference key="2">
    <citation type="journal article" date="2016" name="Sci. Rep.">
        <title>An adaptation to life in acid through a novel mevalonate pathway.</title>
        <authorList>
            <person name="Vinokur J.M."/>
            <person name="Cummins M.C."/>
            <person name="Korman T.P."/>
            <person name="Bowie J.U."/>
        </authorList>
    </citation>
    <scope>FUNCTION</scope>
    <scope>CATALYTIC ACTIVITY</scope>
    <scope>PATHWAY</scope>
</reference>
<organism>
    <name type="scientific">Thermoplasma volcanium (strain ATCC 51530 / DSM 4299 / JCM 9571 / NBRC 15438 / GSS1)</name>
    <dbReference type="NCBI Taxonomy" id="273116"/>
    <lineage>
        <taxon>Archaea</taxon>
        <taxon>Methanobacteriati</taxon>
        <taxon>Thermoplasmatota</taxon>
        <taxon>Thermoplasmata</taxon>
        <taxon>Thermoplasmatales</taxon>
        <taxon>Thermoplasmataceae</taxon>
        <taxon>Thermoplasma</taxon>
    </lineage>
</organism>
<feature type="chain" id="PRO_0000444884" description="Mevalonate 3,5-bisphosphate decarboxylase">
    <location>
        <begin position="1"/>
        <end position="372"/>
    </location>
</feature>
<keyword id="KW-0414">Isoprene biosynthesis</keyword>
<keyword id="KW-0444">Lipid biosynthesis</keyword>
<keyword id="KW-0443">Lipid metabolism</keyword>
<keyword id="KW-0456">Lyase</keyword>
<proteinExistence type="evidence at protein level"/>
<comment type="function">
    <text evidence="2">Catalyzes the ATP-independent decarboxylation of (R)-mevalonate 3,5-bisphosphate to isopentenyl phosphate. Functions in an alternative mevalonate pathway, only present in extreme acidophiles of the Thermoplasmatales order, which passes through mevalonate 3-phosphate rather than mevalonate 5-phosphate.</text>
</comment>
<comment type="catalytic activity">
    <reaction evidence="2">
        <text>(R)-3,5-bisphosphomevalonate + H(+) = isopentenyl phosphate + phosphate + CO2</text>
        <dbReference type="Rhea" id="RHEA:56500"/>
        <dbReference type="ChEBI" id="CHEBI:15378"/>
        <dbReference type="ChEBI" id="CHEBI:16526"/>
        <dbReference type="ChEBI" id="CHEBI:43474"/>
        <dbReference type="ChEBI" id="CHEBI:65078"/>
        <dbReference type="ChEBI" id="CHEBI:82774"/>
        <dbReference type="EC" id="4.1.1.110"/>
    </reaction>
</comment>
<comment type="pathway">
    <text evidence="5">Isoprenoid biosynthesis; isopentenyl diphosphate biosynthesis via mevalonate pathway.</text>
</comment>
<comment type="subunit">
    <text evidence="1">Homodimer.</text>
</comment>
<comment type="miscellaneous">
    <text evidence="5">It is proposed that Thermoplasmatales adapted the classical archaeal mevalonate pathway by replacing mevalonate 5-phosphate decarboxylase (MMD) with two specialized enzymes (mevalonate-3-phosphate 5-kinase and mevalonate 3,5-bisphosphate decarboxylase) in order to produce isoprenoids in extremely acidic environments. It was found that at low pH, the dual function enzyme MMD is unable to carry out the first phosphorylation step, yet retains its ability to perform decarboxylation.</text>
</comment>
<comment type="similarity">
    <text evidence="4">Belongs to the mevalonate 3,5-bisphosphate decarboxylase family.</text>
</comment>